<sequence>MHCPFCRHPDSRVIDSRETDEGQAIRRRRSCPECGRRFTTVETAVLAVVKRSGVTEPFSREKVISGVRRACQGRQVDDDALNLLAQQVEDSVRAAGSPEIPSHDVGLAILGPLRELDEVAYLRFASVYRSFSSADDFAREIEALRAHRNLSAHS</sequence>
<proteinExistence type="inferred from homology"/>
<name>NRDR_MYCTO</name>
<protein>
    <recommendedName>
        <fullName evidence="1">Transcriptional repressor NrdR</fullName>
    </recommendedName>
</protein>
<reference key="1">
    <citation type="journal article" date="2002" name="J. Bacteriol.">
        <title>Whole-genome comparison of Mycobacterium tuberculosis clinical and laboratory strains.</title>
        <authorList>
            <person name="Fleischmann R.D."/>
            <person name="Alland D."/>
            <person name="Eisen J.A."/>
            <person name="Carpenter L."/>
            <person name="White O."/>
            <person name="Peterson J.D."/>
            <person name="DeBoy R.T."/>
            <person name="Dodson R.J."/>
            <person name="Gwinn M.L."/>
            <person name="Haft D.H."/>
            <person name="Hickey E.K."/>
            <person name="Kolonay J.F."/>
            <person name="Nelson W.C."/>
            <person name="Umayam L.A."/>
            <person name="Ermolaeva M.D."/>
            <person name="Salzberg S.L."/>
            <person name="Delcher A."/>
            <person name="Utterback T.R."/>
            <person name="Weidman J.F."/>
            <person name="Khouri H.M."/>
            <person name="Gill J."/>
            <person name="Mikula A."/>
            <person name="Bishai W."/>
            <person name="Jacobs W.R. Jr."/>
            <person name="Venter J.C."/>
            <person name="Fraser C.M."/>
        </authorList>
    </citation>
    <scope>NUCLEOTIDE SEQUENCE [LARGE SCALE GENOMIC DNA]</scope>
    <source>
        <strain>CDC 1551 / Oshkosh</strain>
    </source>
</reference>
<dbReference type="EMBL" id="AE000516">
    <property type="protein sequence ID" value="AAK47107.1"/>
    <property type="molecule type" value="Genomic_DNA"/>
</dbReference>
<dbReference type="PIR" id="A70533">
    <property type="entry name" value="A70533"/>
</dbReference>
<dbReference type="RefSeq" id="WP_003413973.1">
    <property type="nucleotide sequence ID" value="NZ_KK341227.1"/>
</dbReference>
<dbReference type="SMR" id="P9WIZ0"/>
<dbReference type="GeneID" id="45426705"/>
<dbReference type="KEGG" id="mtc:MT2791"/>
<dbReference type="PATRIC" id="fig|83331.31.peg.3006"/>
<dbReference type="HOGENOM" id="CLU_108412_1_0_11"/>
<dbReference type="Proteomes" id="UP000001020">
    <property type="component" value="Chromosome"/>
</dbReference>
<dbReference type="GO" id="GO:0005524">
    <property type="term" value="F:ATP binding"/>
    <property type="evidence" value="ECO:0007669"/>
    <property type="project" value="UniProtKB-KW"/>
</dbReference>
<dbReference type="GO" id="GO:0003677">
    <property type="term" value="F:DNA binding"/>
    <property type="evidence" value="ECO:0007669"/>
    <property type="project" value="UniProtKB-KW"/>
</dbReference>
<dbReference type="GO" id="GO:0008270">
    <property type="term" value="F:zinc ion binding"/>
    <property type="evidence" value="ECO:0007669"/>
    <property type="project" value="UniProtKB-UniRule"/>
</dbReference>
<dbReference type="GO" id="GO:0045892">
    <property type="term" value="P:negative regulation of DNA-templated transcription"/>
    <property type="evidence" value="ECO:0007669"/>
    <property type="project" value="UniProtKB-UniRule"/>
</dbReference>
<dbReference type="HAMAP" id="MF_00440">
    <property type="entry name" value="NrdR"/>
    <property type="match status" value="1"/>
</dbReference>
<dbReference type="InterPro" id="IPR005144">
    <property type="entry name" value="ATP-cone_dom"/>
</dbReference>
<dbReference type="InterPro" id="IPR055173">
    <property type="entry name" value="NrdR-like_N"/>
</dbReference>
<dbReference type="InterPro" id="IPR003796">
    <property type="entry name" value="RNR_NrdR-like"/>
</dbReference>
<dbReference type="NCBIfam" id="TIGR00244">
    <property type="entry name" value="transcriptional regulator NrdR"/>
    <property type="match status" value="1"/>
</dbReference>
<dbReference type="PANTHER" id="PTHR30455">
    <property type="entry name" value="TRANSCRIPTIONAL REPRESSOR NRDR"/>
    <property type="match status" value="1"/>
</dbReference>
<dbReference type="PANTHER" id="PTHR30455:SF2">
    <property type="entry name" value="TRANSCRIPTIONAL REPRESSOR NRDR"/>
    <property type="match status" value="1"/>
</dbReference>
<dbReference type="Pfam" id="PF03477">
    <property type="entry name" value="ATP-cone"/>
    <property type="match status" value="1"/>
</dbReference>
<dbReference type="Pfam" id="PF22811">
    <property type="entry name" value="Zn_ribbon_NrdR"/>
    <property type="match status" value="1"/>
</dbReference>
<dbReference type="PROSITE" id="PS51161">
    <property type="entry name" value="ATP_CONE"/>
    <property type="match status" value="1"/>
</dbReference>
<comment type="function">
    <text evidence="1">Negatively regulates transcription of bacterial ribonucleotide reductase nrd genes and operons by binding to NrdR-boxes.</text>
</comment>
<comment type="cofactor">
    <cofactor evidence="1">
        <name>Zn(2+)</name>
        <dbReference type="ChEBI" id="CHEBI:29105"/>
    </cofactor>
    <text evidence="1">Binds 1 zinc ion.</text>
</comment>
<comment type="similarity">
    <text evidence="1">Belongs to the NrdR family.</text>
</comment>
<keyword id="KW-0067">ATP-binding</keyword>
<keyword id="KW-0238">DNA-binding</keyword>
<keyword id="KW-0479">Metal-binding</keyword>
<keyword id="KW-0547">Nucleotide-binding</keyword>
<keyword id="KW-1185">Reference proteome</keyword>
<keyword id="KW-0678">Repressor</keyword>
<keyword id="KW-0804">Transcription</keyword>
<keyword id="KW-0805">Transcription regulation</keyword>
<keyword id="KW-0862">Zinc</keyword>
<keyword id="KW-0863">Zinc-finger</keyword>
<evidence type="ECO:0000255" key="1">
    <source>
        <dbReference type="HAMAP-Rule" id="MF_00440"/>
    </source>
</evidence>
<gene>
    <name evidence="1" type="primary">nrdR</name>
    <name type="ordered locus">MT2791</name>
</gene>
<organism>
    <name type="scientific">Mycobacterium tuberculosis (strain CDC 1551 / Oshkosh)</name>
    <dbReference type="NCBI Taxonomy" id="83331"/>
    <lineage>
        <taxon>Bacteria</taxon>
        <taxon>Bacillati</taxon>
        <taxon>Actinomycetota</taxon>
        <taxon>Actinomycetes</taxon>
        <taxon>Mycobacteriales</taxon>
        <taxon>Mycobacteriaceae</taxon>
        <taxon>Mycobacterium</taxon>
        <taxon>Mycobacterium tuberculosis complex</taxon>
    </lineage>
</organism>
<feature type="chain" id="PRO_0000427921" description="Transcriptional repressor NrdR">
    <location>
        <begin position="1"/>
        <end position="154"/>
    </location>
</feature>
<feature type="domain" description="ATP-cone" evidence="1">
    <location>
        <begin position="46"/>
        <end position="136"/>
    </location>
</feature>
<feature type="zinc finger region" evidence="1">
    <location>
        <begin position="3"/>
        <end position="34"/>
    </location>
</feature>
<accession>P9WIZ0</accession>
<accession>L0TAN9</accession>
<accession>O07217</accession>
<accession>P67313</accession>